<accession>Q8VYS2</accession>
<accession>Q8H140</accession>
<accession>Q9M819</accession>
<reference key="1">
    <citation type="journal article" date="2000" name="Nature">
        <title>Sequence and analysis of chromosome 1 of the plant Arabidopsis thaliana.</title>
        <authorList>
            <person name="Theologis A."/>
            <person name="Ecker J.R."/>
            <person name="Palm C.J."/>
            <person name="Federspiel N.A."/>
            <person name="Kaul S."/>
            <person name="White O."/>
            <person name="Alonso J."/>
            <person name="Altafi H."/>
            <person name="Araujo R."/>
            <person name="Bowman C.L."/>
            <person name="Brooks S.Y."/>
            <person name="Buehler E."/>
            <person name="Chan A."/>
            <person name="Chao Q."/>
            <person name="Chen H."/>
            <person name="Cheuk R.F."/>
            <person name="Chin C.W."/>
            <person name="Chung M.K."/>
            <person name="Conn L."/>
            <person name="Conway A.B."/>
            <person name="Conway A.R."/>
            <person name="Creasy T.H."/>
            <person name="Dewar K."/>
            <person name="Dunn P."/>
            <person name="Etgu P."/>
            <person name="Feldblyum T.V."/>
            <person name="Feng J.-D."/>
            <person name="Fong B."/>
            <person name="Fujii C.Y."/>
            <person name="Gill J.E."/>
            <person name="Goldsmith A.D."/>
            <person name="Haas B."/>
            <person name="Hansen N.F."/>
            <person name="Hughes B."/>
            <person name="Huizar L."/>
            <person name="Hunter J.L."/>
            <person name="Jenkins J."/>
            <person name="Johnson-Hopson C."/>
            <person name="Khan S."/>
            <person name="Khaykin E."/>
            <person name="Kim C.J."/>
            <person name="Koo H.L."/>
            <person name="Kremenetskaia I."/>
            <person name="Kurtz D.B."/>
            <person name="Kwan A."/>
            <person name="Lam B."/>
            <person name="Langin-Hooper S."/>
            <person name="Lee A."/>
            <person name="Lee J.M."/>
            <person name="Lenz C.A."/>
            <person name="Li J.H."/>
            <person name="Li Y.-P."/>
            <person name="Lin X."/>
            <person name="Liu S.X."/>
            <person name="Liu Z.A."/>
            <person name="Luros J.S."/>
            <person name="Maiti R."/>
            <person name="Marziali A."/>
            <person name="Militscher J."/>
            <person name="Miranda M."/>
            <person name="Nguyen M."/>
            <person name="Nierman W.C."/>
            <person name="Osborne B.I."/>
            <person name="Pai G."/>
            <person name="Peterson J."/>
            <person name="Pham P.K."/>
            <person name="Rizzo M."/>
            <person name="Rooney T."/>
            <person name="Rowley D."/>
            <person name="Sakano H."/>
            <person name="Salzberg S.L."/>
            <person name="Schwartz J.R."/>
            <person name="Shinn P."/>
            <person name="Southwick A.M."/>
            <person name="Sun H."/>
            <person name="Tallon L.J."/>
            <person name="Tambunga G."/>
            <person name="Toriumi M.J."/>
            <person name="Town C.D."/>
            <person name="Utterback T."/>
            <person name="Van Aken S."/>
            <person name="Vaysberg M."/>
            <person name="Vysotskaia V.S."/>
            <person name="Walker M."/>
            <person name="Wu D."/>
            <person name="Yu G."/>
            <person name="Fraser C.M."/>
            <person name="Venter J.C."/>
            <person name="Davis R.W."/>
        </authorList>
    </citation>
    <scope>NUCLEOTIDE SEQUENCE [LARGE SCALE GENOMIC DNA]</scope>
    <source>
        <strain>cv. Columbia</strain>
    </source>
</reference>
<reference key="2">
    <citation type="journal article" date="2017" name="Plant J.">
        <title>Araport11: a complete reannotation of the Arabidopsis thaliana reference genome.</title>
        <authorList>
            <person name="Cheng C.Y."/>
            <person name="Krishnakumar V."/>
            <person name="Chan A.P."/>
            <person name="Thibaud-Nissen F."/>
            <person name="Schobel S."/>
            <person name="Town C.D."/>
        </authorList>
    </citation>
    <scope>GENOME REANNOTATION</scope>
    <source>
        <strain>cv. Columbia</strain>
    </source>
</reference>
<reference key="3">
    <citation type="journal article" date="2003" name="Science">
        <title>Empirical analysis of transcriptional activity in the Arabidopsis genome.</title>
        <authorList>
            <person name="Yamada K."/>
            <person name="Lim J."/>
            <person name="Dale J.M."/>
            <person name="Chen H."/>
            <person name="Shinn P."/>
            <person name="Palm C.J."/>
            <person name="Southwick A.M."/>
            <person name="Wu H.C."/>
            <person name="Kim C.J."/>
            <person name="Nguyen M."/>
            <person name="Pham P.K."/>
            <person name="Cheuk R.F."/>
            <person name="Karlin-Newmann G."/>
            <person name="Liu S.X."/>
            <person name="Lam B."/>
            <person name="Sakano H."/>
            <person name="Wu T."/>
            <person name="Yu G."/>
            <person name="Miranda M."/>
            <person name="Quach H.L."/>
            <person name="Tripp M."/>
            <person name="Chang C.H."/>
            <person name="Lee J.M."/>
            <person name="Toriumi M.J."/>
            <person name="Chan M.M."/>
            <person name="Tang C.C."/>
            <person name="Onodera C.S."/>
            <person name="Deng J.M."/>
            <person name="Akiyama K."/>
            <person name="Ansari Y."/>
            <person name="Arakawa T."/>
            <person name="Banh J."/>
            <person name="Banno F."/>
            <person name="Bowser L."/>
            <person name="Brooks S.Y."/>
            <person name="Carninci P."/>
            <person name="Chao Q."/>
            <person name="Choy N."/>
            <person name="Enju A."/>
            <person name="Goldsmith A.D."/>
            <person name="Gurjal M."/>
            <person name="Hansen N.F."/>
            <person name="Hayashizaki Y."/>
            <person name="Johnson-Hopson C."/>
            <person name="Hsuan V.W."/>
            <person name="Iida K."/>
            <person name="Karnes M."/>
            <person name="Khan S."/>
            <person name="Koesema E."/>
            <person name="Ishida J."/>
            <person name="Jiang P.X."/>
            <person name="Jones T."/>
            <person name="Kawai J."/>
            <person name="Kamiya A."/>
            <person name="Meyers C."/>
            <person name="Nakajima M."/>
            <person name="Narusaka M."/>
            <person name="Seki M."/>
            <person name="Sakurai T."/>
            <person name="Satou M."/>
            <person name="Tamse R."/>
            <person name="Vaysberg M."/>
            <person name="Wallender E.K."/>
            <person name="Wong C."/>
            <person name="Yamamura Y."/>
            <person name="Yuan S."/>
            <person name="Shinozaki K."/>
            <person name="Davis R.W."/>
            <person name="Theologis A."/>
            <person name="Ecker J.R."/>
        </authorList>
    </citation>
    <scope>NUCLEOTIDE SEQUENCE [LARGE SCALE MRNA]</scope>
    <source>
        <strain>cv. Columbia</strain>
    </source>
</reference>
<reference key="4">
    <citation type="journal article" date="2005" name="Biol. Chem.">
        <title>The tRNase Z family of proteins: physiological functions, substrate specificity and structural properties.</title>
        <authorList>
            <person name="Vogel A."/>
            <person name="Schilling O."/>
            <person name="Spaeth B."/>
            <person name="Marchfelder A."/>
        </authorList>
    </citation>
    <scope>GENE FAMILY</scope>
    <scope>NOMENCLATURE</scope>
</reference>
<reference key="5">
    <citation type="journal article" date="2009" name="Plant Physiol.">
        <title>Arabidopsis encodes four tRNase Z enzymes.</title>
        <authorList>
            <person name="Canino G."/>
            <person name="Bocian E."/>
            <person name="Barbezier N."/>
            <person name="Echeverria M."/>
            <person name="Forner J."/>
            <person name="Binder S."/>
            <person name="Marchfelder A."/>
        </authorList>
    </citation>
    <scope>FUNCTION</scope>
    <scope>CATALYTIC ACTIVITY</scope>
    <scope>SUBCELLULAR LOCATION</scope>
    <scope>DISRUPTION PHENOTYPE</scope>
</reference>
<reference key="6">
    <citation type="journal article" date="2009" name="Plant Physiol.">
        <title>Processing of a dicistronic tRNA-snoRNA precursor: combined analysis in vitro and in vivo reveals alternate pathways and coupling to assembly of snoRNP.</title>
        <authorList>
            <person name="Barbezier N."/>
            <person name="Canino G."/>
            <person name="Rodor J."/>
            <person name="Jobet E."/>
            <person name="Saez-Vasquez J."/>
            <person name="Marchfelder A."/>
            <person name="Echeverria M."/>
        </authorList>
    </citation>
    <scope>FUNCTION</scope>
</reference>
<keyword id="KW-0106">Calcium</keyword>
<keyword id="KW-0255">Endonuclease</keyword>
<keyword id="KW-0378">Hydrolase</keyword>
<keyword id="KW-0460">Magnesium</keyword>
<keyword id="KW-0464">Manganese</keyword>
<keyword id="KW-0479">Metal-binding</keyword>
<keyword id="KW-0496">Mitochondrion</keyword>
<keyword id="KW-0540">Nuclease</keyword>
<keyword id="KW-0539">Nucleus</keyword>
<keyword id="KW-1185">Reference proteome</keyword>
<keyword id="KW-0809">Transit peptide</keyword>
<keyword id="KW-0819">tRNA processing</keyword>
<keyword id="KW-0862">Zinc</keyword>
<protein>
    <recommendedName>
        <fullName evidence="6">tRNase Z TRZ3, mitochondrial</fullName>
        <ecNumber evidence="4">3.1.26.11</ecNumber>
    </recommendedName>
    <alternativeName>
        <fullName evidence="6">Long tRNase Z 1</fullName>
    </alternativeName>
    <alternativeName>
        <fullName evidence="6">tRNase ZL1</fullName>
        <shortName evidence="6">AthTRZL1</shortName>
    </alternativeName>
</protein>
<dbReference type="EC" id="3.1.26.11" evidence="4"/>
<dbReference type="EMBL" id="AC022354">
    <property type="protein sequence ID" value="AAF29402.1"/>
    <property type="status" value="ALT_SEQ"/>
    <property type="molecule type" value="Genomic_DNA"/>
</dbReference>
<dbReference type="EMBL" id="CP002684">
    <property type="protein sequence ID" value="AEE32764.1"/>
    <property type="molecule type" value="Genomic_DNA"/>
</dbReference>
<dbReference type="EMBL" id="AY070061">
    <property type="protein sequence ID" value="AAL49818.1"/>
    <property type="molecule type" value="mRNA"/>
</dbReference>
<dbReference type="EMBL" id="AY117303">
    <property type="protein sequence ID" value="AAM51378.1"/>
    <property type="molecule type" value="mRNA"/>
</dbReference>
<dbReference type="EMBL" id="BT000791">
    <property type="protein sequence ID" value="AAN31930.1"/>
    <property type="molecule type" value="mRNA"/>
</dbReference>
<dbReference type="PIR" id="F96561">
    <property type="entry name" value="F96561"/>
</dbReference>
<dbReference type="RefSeq" id="NP_175628.2">
    <property type="nucleotide sequence ID" value="NM_104097.6"/>
</dbReference>
<dbReference type="SMR" id="Q8VYS2"/>
<dbReference type="FunCoup" id="Q8VYS2">
    <property type="interactions" value="3894"/>
</dbReference>
<dbReference type="STRING" id="3702.Q8VYS2"/>
<dbReference type="GlyGen" id="Q8VYS2">
    <property type="glycosylation" value="2 sites"/>
</dbReference>
<dbReference type="PaxDb" id="3702-AT1G52160.1"/>
<dbReference type="ProteomicsDB" id="226811"/>
<dbReference type="EnsemblPlants" id="AT1G52160.1">
    <property type="protein sequence ID" value="AT1G52160.1"/>
    <property type="gene ID" value="AT1G52160"/>
</dbReference>
<dbReference type="GeneID" id="841647"/>
<dbReference type="Gramene" id="AT1G52160.1">
    <property type="protein sequence ID" value="AT1G52160.1"/>
    <property type="gene ID" value="AT1G52160"/>
</dbReference>
<dbReference type="KEGG" id="ath:AT1G52160"/>
<dbReference type="Araport" id="AT1G52160"/>
<dbReference type="TAIR" id="AT1G52160">
    <property type="gene designation" value="TRZ3"/>
</dbReference>
<dbReference type="eggNOG" id="KOG2121">
    <property type="taxonomic scope" value="Eukaryota"/>
</dbReference>
<dbReference type="HOGENOM" id="CLU_006220_2_0_1"/>
<dbReference type="InParanoid" id="Q8VYS2"/>
<dbReference type="OMA" id="TLFRDEM"/>
<dbReference type="PhylomeDB" id="Q8VYS2"/>
<dbReference type="BRENDA" id="3.1.26.11">
    <property type="organism ID" value="399"/>
</dbReference>
<dbReference type="PRO" id="PR:Q8VYS2"/>
<dbReference type="Proteomes" id="UP000006548">
    <property type="component" value="Chromosome 1"/>
</dbReference>
<dbReference type="ExpressionAtlas" id="Q8VYS2">
    <property type="expression patterns" value="baseline and differential"/>
</dbReference>
<dbReference type="GO" id="GO:0005739">
    <property type="term" value="C:mitochondrion"/>
    <property type="evidence" value="ECO:0007669"/>
    <property type="project" value="UniProtKB-SubCell"/>
</dbReference>
<dbReference type="GO" id="GO:0005634">
    <property type="term" value="C:nucleus"/>
    <property type="evidence" value="ECO:0007669"/>
    <property type="project" value="UniProtKB-SubCell"/>
</dbReference>
<dbReference type="GO" id="GO:0042781">
    <property type="term" value="F:3'-tRNA processing endoribonuclease activity"/>
    <property type="evidence" value="ECO:0000314"/>
    <property type="project" value="TAIR"/>
</dbReference>
<dbReference type="GO" id="GO:0046872">
    <property type="term" value="F:metal ion binding"/>
    <property type="evidence" value="ECO:0007669"/>
    <property type="project" value="UniProtKB-KW"/>
</dbReference>
<dbReference type="GO" id="GO:0042780">
    <property type="term" value="P:tRNA 3'-end processing"/>
    <property type="evidence" value="ECO:0000314"/>
    <property type="project" value="TAIR"/>
</dbReference>
<dbReference type="CDD" id="cd07718">
    <property type="entry name" value="RNaseZ_ELAC1_ELAC2-C-term-like_MBL-fold"/>
    <property type="match status" value="1"/>
</dbReference>
<dbReference type="FunFam" id="3.60.15.10:FF:000052">
    <property type="entry name" value="tRNAse Z TRZ4, mitochondrial"/>
    <property type="match status" value="1"/>
</dbReference>
<dbReference type="FunFam" id="3.60.15.10:FF:000037">
    <property type="entry name" value="tRNAse Z4"/>
    <property type="match status" value="1"/>
</dbReference>
<dbReference type="Gene3D" id="3.60.15.10">
    <property type="entry name" value="Ribonuclease Z/Hydroxyacylglutathione hydrolase-like"/>
    <property type="match status" value="2"/>
</dbReference>
<dbReference type="HAMAP" id="MF_01818">
    <property type="entry name" value="RNase_Z_BN"/>
    <property type="match status" value="1"/>
</dbReference>
<dbReference type="InterPro" id="IPR036866">
    <property type="entry name" value="RibonucZ/Hydroxyglut_hydro"/>
</dbReference>
<dbReference type="InterPro" id="IPR013471">
    <property type="entry name" value="RNase_Z/BN"/>
</dbReference>
<dbReference type="InterPro" id="IPR047151">
    <property type="entry name" value="RNZ2-like"/>
</dbReference>
<dbReference type="InterPro" id="IPR027794">
    <property type="entry name" value="tRNase_Z_dom"/>
</dbReference>
<dbReference type="PANTHER" id="PTHR12553:SF74">
    <property type="entry name" value="TRNASE Z TRZ3, MITOCHONDRIAL"/>
    <property type="match status" value="1"/>
</dbReference>
<dbReference type="PANTHER" id="PTHR12553">
    <property type="entry name" value="ZINC PHOSPHODIESTERASE ELAC PROTEIN 2"/>
    <property type="match status" value="1"/>
</dbReference>
<dbReference type="Pfam" id="PF13691">
    <property type="entry name" value="Lactamase_B_4"/>
    <property type="match status" value="1"/>
</dbReference>
<dbReference type="SUPFAM" id="SSF56281">
    <property type="entry name" value="Metallo-hydrolase/oxidoreductase"/>
    <property type="match status" value="2"/>
</dbReference>
<proteinExistence type="evidence at protein level"/>
<gene>
    <name evidence="6" type="primary">TRZ3</name>
    <name evidence="8" type="ordered locus">At1g52160</name>
    <name evidence="9" type="ORF">F9I5.1</name>
</gene>
<evidence type="ECO:0000250" key="1">
    <source>
        <dbReference type="UniProtKB" id="Q8LGU7"/>
    </source>
</evidence>
<evidence type="ECO:0000255" key="2"/>
<evidence type="ECO:0000256" key="3">
    <source>
        <dbReference type="SAM" id="MobiDB-lite"/>
    </source>
</evidence>
<evidence type="ECO:0000269" key="4">
    <source>
    </source>
</evidence>
<evidence type="ECO:0000269" key="5">
    <source>
    </source>
</evidence>
<evidence type="ECO:0000303" key="6">
    <source>
    </source>
</evidence>
<evidence type="ECO:0000305" key="7"/>
<evidence type="ECO:0000312" key="8">
    <source>
        <dbReference type="Araport" id="AT1G52160"/>
    </source>
</evidence>
<evidence type="ECO:0000312" key="9">
    <source>
        <dbReference type="EMBL" id="AAF29402.1"/>
    </source>
</evidence>
<evidence type="ECO:0000312" key="10">
    <source>
        <dbReference type="EMBL" id="AAL49818.1"/>
    </source>
</evidence>
<sequence>MINSMPYLHKNLRLLRLLSSKSSPFPLSLRPFSPRSFSLSTLFSSSSSSSSMENNEATNGSKSSSNSFVFNKRRAEGFDITDKKKRNLERKSQKLNPTNTIAYAQILGTGMDTQDTSSSVLLFFDKQRFIFNAGEGLQRFCTEHKIKLSKIDHVFLSRVCSETAGGLPGLLLTLAGIGEEGLSVNVWGPSDLNYLVDAMKSFIPRAAMVHTRSFGPSSTPDPIVLVNDEVVKISAIILKPCHSEEDSGNKSGDLSVVYVCELPEILGKFDLEKAKKVFGVKPGPKYSRLQSGESVKSDERDITVHPSDVMGPSLPGPIVLLVDCPTESHAAELFSLKSLESYYSSPDEQTIGAKFVNCIIHLSPSSVTSSPTYQSWMKKFHLTQHILAGHQRKNMAFPILKASSRIAARLNYLCPQFFPAPGFWPSQLTDNSIIDPTPSNKCSSSNLAESISAENLLKFNLRPVAIRGIDRSCIPAPLTSSEVVDELLSEIPEIKDKSEEIKQFWNKQHNKTIIEKLWLSECNTVLPNCLEKIRRDDMEIVILGTGSSQPSKYRNVSAIFIDLFSRGSLLLDCGEGTLGQLKRRYGLDGADEAVRKLRCIWISHIHADHHTGLARILALRSKLLKGVTHEPVIVVGPRPLKRFLDAYQRLEDLDMEFLDCRSTTATSWASLESGGEAEGSLFTQGSPMQSVFKRSDISMDNSSVLLCLKNLKKVLSEIGLNDLISFPVVHCPQAYGVVIKAAERVNSVGEQILGWKMVYSGDSRPCPETVEASRDATILIHEATFEDALIEEALAKNHSTTKEAIDVGSAANVYRIVLTHFSQRYPKIPVIDESHMHNTCIAFDLMSINMADLHVLPKVLPYFKTLFRDEMVEDEDADDVAMDDLKEEAL</sequence>
<organism evidence="10">
    <name type="scientific">Arabidopsis thaliana</name>
    <name type="common">Mouse-ear cress</name>
    <dbReference type="NCBI Taxonomy" id="3702"/>
    <lineage>
        <taxon>Eukaryota</taxon>
        <taxon>Viridiplantae</taxon>
        <taxon>Streptophyta</taxon>
        <taxon>Embryophyta</taxon>
        <taxon>Tracheophyta</taxon>
        <taxon>Spermatophyta</taxon>
        <taxon>Magnoliopsida</taxon>
        <taxon>eudicotyledons</taxon>
        <taxon>Gunneridae</taxon>
        <taxon>Pentapetalae</taxon>
        <taxon>rosids</taxon>
        <taxon>malvids</taxon>
        <taxon>Brassicales</taxon>
        <taxon>Brassicaceae</taxon>
        <taxon>Camelineae</taxon>
        <taxon>Arabidopsis</taxon>
    </lineage>
</organism>
<comment type="function">
    <text evidence="4 5">Zinc phosphodiesterase, which displays tRNA 3'-processing endonuclease activity (PubMed:19411372). Involved in tRNA maturation, by removing a 3'-trailer from precursor tRNA (PubMed:19411372). Can process the mitochondrial tRNA-like structures (t-elements) (PubMed:19411372). Involved in the processing of small nucleolar RNAs (snoRNAs) (PubMed:19420328).</text>
</comment>
<comment type="catalytic activity">
    <reaction evidence="4">
        <text>Endonucleolytic cleavage of RNA, removing extra 3' nucleotides from tRNA precursor, generating 3' termini of tRNAs. A 3'-hydroxy group is left at the tRNA terminus and a 5'-phosphoryl group is left at the trailer molecule.</text>
        <dbReference type="EC" id="3.1.26.11"/>
    </reaction>
</comment>
<comment type="cofactor">
    <cofactor evidence="1">
        <name>Zn(2+)</name>
        <dbReference type="ChEBI" id="CHEBI:29105"/>
    </cofactor>
    <cofactor evidence="1">
        <name>Ca(2+)</name>
        <dbReference type="ChEBI" id="CHEBI:29108"/>
    </cofactor>
    <cofactor evidence="1">
        <name>Mn(2+)</name>
        <dbReference type="ChEBI" id="CHEBI:29035"/>
    </cofactor>
    <cofactor evidence="1">
        <name>Mg(2+)</name>
        <dbReference type="ChEBI" id="CHEBI:18420"/>
    </cofactor>
</comment>
<comment type="subunit">
    <text evidence="1">Homodimer.</text>
</comment>
<comment type="subcellular location">
    <subcellularLocation>
        <location evidence="4">Mitochondrion</location>
    </subcellularLocation>
    <subcellularLocation>
        <location evidence="4">Nucleus</location>
    </subcellularLocation>
</comment>
<comment type="disruption phenotype">
    <text evidence="4">No visible phenotype due to the redundancy with TRZ4. Trz3 and trz4 double mutants are lethal.</text>
</comment>
<comment type="similarity">
    <text evidence="7">Belongs to the RNase Z family.</text>
</comment>
<comment type="sequence caution" evidence="7">
    <conflict type="erroneous gene model prediction">
        <sequence resource="EMBL-CDS" id="AAF29402"/>
    </conflict>
</comment>
<feature type="transit peptide" description="Mitochondrion" evidence="2">
    <location>
        <begin position="1"/>
        <end position="44"/>
    </location>
</feature>
<feature type="chain" id="PRO_0000439063" description="tRNase Z TRZ3, mitochondrial" evidence="2">
    <location>
        <begin position="45"/>
        <end position="890"/>
    </location>
</feature>
<feature type="region of interest" description="Disordered" evidence="3">
    <location>
        <begin position="46"/>
        <end position="67"/>
    </location>
</feature>
<name>RNZ3_ARATH</name>